<comment type="function">
    <text evidence="1">The beta subunit is responsible for the synthesis of L-tryptophan from indole and L-serine.</text>
</comment>
<comment type="catalytic activity">
    <reaction evidence="1">
        <text>(1S,2R)-1-C-(indol-3-yl)glycerol 3-phosphate + L-serine = D-glyceraldehyde 3-phosphate + L-tryptophan + H2O</text>
        <dbReference type="Rhea" id="RHEA:10532"/>
        <dbReference type="ChEBI" id="CHEBI:15377"/>
        <dbReference type="ChEBI" id="CHEBI:33384"/>
        <dbReference type="ChEBI" id="CHEBI:57912"/>
        <dbReference type="ChEBI" id="CHEBI:58866"/>
        <dbReference type="ChEBI" id="CHEBI:59776"/>
        <dbReference type="EC" id="4.2.1.20"/>
    </reaction>
</comment>
<comment type="cofactor">
    <cofactor evidence="1">
        <name>pyridoxal 5'-phosphate</name>
        <dbReference type="ChEBI" id="CHEBI:597326"/>
    </cofactor>
</comment>
<comment type="pathway">
    <text evidence="1">Amino-acid biosynthesis; L-tryptophan biosynthesis; L-tryptophan from chorismate: step 5/5.</text>
</comment>
<comment type="subunit">
    <text evidence="1">Tetramer of two alpha and two beta chains.</text>
</comment>
<comment type="similarity">
    <text evidence="1">Belongs to the TrpB family.</text>
</comment>
<keyword id="KW-0028">Amino-acid biosynthesis</keyword>
<keyword id="KW-0057">Aromatic amino acid biosynthesis</keyword>
<keyword id="KW-0456">Lyase</keyword>
<keyword id="KW-0663">Pyridoxal phosphate</keyword>
<keyword id="KW-0822">Tryptophan biosynthesis</keyword>
<gene>
    <name evidence="1" type="primary">trpB</name>
    <name type="ordered locus">SPT_1735</name>
</gene>
<proteinExistence type="inferred from homology"/>
<reference key="1">
    <citation type="journal article" date="2010" name="Genome Biol.">
        <title>Structure and dynamics of the pan-genome of Streptococcus pneumoniae and closely related species.</title>
        <authorList>
            <person name="Donati C."/>
            <person name="Hiller N.L."/>
            <person name="Tettelin H."/>
            <person name="Muzzi A."/>
            <person name="Croucher N.J."/>
            <person name="Angiuoli S.V."/>
            <person name="Oggioni M."/>
            <person name="Dunning Hotopp J.C."/>
            <person name="Hu F.Z."/>
            <person name="Riley D.R."/>
            <person name="Covacci A."/>
            <person name="Mitchell T.J."/>
            <person name="Bentley S.D."/>
            <person name="Kilian M."/>
            <person name="Ehrlich G.D."/>
            <person name="Rappuoli R."/>
            <person name="Moxon E.R."/>
            <person name="Masignani V."/>
        </authorList>
    </citation>
    <scope>NUCLEOTIDE SEQUENCE [LARGE SCALE GENOMIC DNA]</scope>
    <source>
        <strain>Taiwan19F-14</strain>
    </source>
</reference>
<protein>
    <recommendedName>
        <fullName evidence="1">Tryptophan synthase beta chain</fullName>
        <ecNumber evidence="1">4.2.1.20</ecNumber>
    </recommendedName>
</protein>
<evidence type="ECO:0000255" key="1">
    <source>
        <dbReference type="HAMAP-Rule" id="MF_00133"/>
    </source>
</evidence>
<accession>C1CT51</accession>
<name>TRPB_STRZT</name>
<feature type="chain" id="PRO_1000198758" description="Tryptophan synthase beta chain">
    <location>
        <begin position="1"/>
        <end position="407"/>
    </location>
</feature>
<feature type="modified residue" description="N6-(pyridoxal phosphate)lysine" evidence="1">
    <location>
        <position position="91"/>
    </location>
</feature>
<sequence length="407" mass="44250">MAYQEPNKDGFYGKFGGRFVPETLMTAVLELEKAYRESQADPSFQEELNQLLRQYVGRETPLYYAKNLTQHIGGAKIYLKREDLNHTGAHKINNALGQVWLAKRMGKKKIIAETGAGQHGVATATAAALFNMECTIYMGEEDVKRQALNVFRMELLGAKVEAVTDGSRVLKDAVNAALRSWVANIDDTHYILGSALGPHPFPEIVRDFQSVIGREAKQQYRDLTGQNLPDALVACVGGGSNAIGLFHPFVEDESVAMYGAEAAGFGVDTEHHAATLTKGRPGVLHGSLMDVLQDAHGQILEAFSISAGLDYPGIGPEHSHYHDIKRASYVPVTDEEALEGFQLLSRVEGIIPALESSHAIAFAVKLAKELGPEKSMIVCLSGRGDKDVVQVKDRLEADAAKKGEAHA</sequence>
<dbReference type="EC" id="4.2.1.20" evidence="1"/>
<dbReference type="EMBL" id="CP000921">
    <property type="protein sequence ID" value="ACO22811.1"/>
    <property type="molecule type" value="Genomic_DNA"/>
</dbReference>
<dbReference type="RefSeq" id="WP_000331287.1">
    <property type="nucleotide sequence ID" value="NC_012469.1"/>
</dbReference>
<dbReference type="SMR" id="C1CT51"/>
<dbReference type="KEGG" id="snt:SPT_1735"/>
<dbReference type="HOGENOM" id="CLU_016734_3_1_9"/>
<dbReference type="UniPathway" id="UPA00035">
    <property type="reaction ID" value="UER00044"/>
</dbReference>
<dbReference type="GO" id="GO:0005737">
    <property type="term" value="C:cytoplasm"/>
    <property type="evidence" value="ECO:0007669"/>
    <property type="project" value="TreeGrafter"/>
</dbReference>
<dbReference type="GO" id="GO:0004834">
    <property type="term" value="F:tryptophan synthase activity"/>
    <property type="evidence" value="ECO:0007669"/>
    <property type="project" value="UniProtKB-UniRule"/>
</dbReference>
<dbReference type="CDD" id="cd06446">
    <property type="entry name" value="Trp-synth_B"/>
    <property type="match status" value="1"/>
</dbReference>
<dbReference type="FunFam" id="3.40.50.1100:FF:000001">
    <property type="entry name" value="Tryptophan synthase beta chain"/>
    <property type="match status" value="1"/>
</dbReference>
<dbReference type="FunFam" id="3.40.50.1100:FF:000004">
    <property type="entry name" value="Tryptophan synthase beta chain"/>
    <property type="match status" value="1"/>
</dbReference>
<dbReference type="Gene3D" id="3.40.50.1100">
    <property type="match status" value="2"/>
</dbReference>
<dbReference type="HAMAP" id="MF_00133">
    <property type="entry name" value="Trp_synth_beta"/>
    <property type="match status" value="1"/>
</dbReference>
<dbReference type="InterPro" id="IPR006653">
    <property type="entry name" value="Trp_synth_b_CS"/>
</dbReference>
<dbReference type="InterPro" id="IPR006654">
    <property type="entry name" value="Trp_synth_beta"/>
</dbReference>
<dbReference type="InterPro" id="IPR023026">
    <property type="entry name" value="Trp_synth_beta/beta-like"/>
</dbReference>
<dbReference type="InterPro" id="IPR001926">
    <property type="entry name" value="TrpB-like_PALP"/>
</dbReference>
<dbReference type="InterPro" id="IPR036052">
    <property type="entry name" value="TrpB-like_PALP_sf"/>
</dbReference>
<dbReference type="NCBIfam" id="TIGR00263">
    <property type="entry name" value="trpB"/>
    <property type="match status" value="1"/>
</dbReference>
<dbReference type="PANTHER" id="PTHR48077:SF3">
    <property type="entry name" value="TRYPTOPHAN SYNTHASE"/>
    <property type="match status" value="1"/>
</dbReference>
<dbReference type="PANTHER" id="PTHR48077">
    <property type="entry name" value="TRYPTOPHAN SYNTHASE-RELATED"/>
    <property type="match status" value="1"/>
</dbReference>
<dbReference type="Pfam" id="PF00291">
    <property type="entry name" value="PALP"/>
    <property type="match status" value="1"/>
</dbReference>
<dbReference type="PIRSF" id="PIRSF001413">
    <property type="entry name" value="Trp_syn_beta"/>
    <property type="match status" value="1"/>
</dbReference>
<dbReference type="SUPFAM" id="SSF53686">
    <property type="entry name" value="Tryptophan synthase beta subunit-like PLP-dependent enzymes"/>
    <property type="match status" value="1"/>
</dbReference>
<dbReference type="PROSITE" id="PS00168">
    <property type="entry name" value="TRP_SYNTHASE_BETA"/>
    <property type="match status" value="1"/>
</dbReference>
<organism>
    <name type="scientific">Streptococcus pneumoniae (strain Taiwan19F-14)</name>
    <dbReference type="NCBI Taxonomy" id="487213"/>
    <lineage>
        <taxon>Bacteria</taxon>
        <taxon>Bacillati</taxon>
        <taxon>Bacillota</taxon>
        <taxon>Bacilli</taxon>
        <taxon>Lactobacillales</taxon>
        <taxon>Streptococcaceae</taxon>
        <taxon>Streptococcus</taxon>
    </lineage>
</organism>